<gene>
    <name evidence="1" type="primary">der</name>
    <name type="synonym">engA</name>
    <name type="ordered locus">LMOf2365_1966</name>
</gene>
<accession>Q71Y78</accession>
<comment type="function">
    <text evidence="1">GTPase that plays an essential role in the late steps of ribosome biogenesis.</text>
</comment>
<comment type="subunit">
    <text evidence="1">Associates with the 50S ribosomal subunit.</text>
</comment>
<comment type="similarity">
    <text evidence="1">Belongs to the TRAFAC class TrmE-Era-EngA-EngB-Septin-like GTPase superfamily. EngA (Der) GTPase family.</text>
</comment>
<dbReference type="EMBL" id="AE017262">
    <property type="protein sequence ID" value="AAT04736.1"/>
    <property type="molecule type" value="Genomic_DNA"/>
</dbReference>
<dbReference type="RefSeq" id="WP_003727996.1">
    <property type="nucleotide sequence ID" value="NC_002973.6"/>
</dbReference>
<dbReference type="SMR" id="Q71Y78"/>
<dbReference type="KEGG" id="lmf:LMOf2365_1966"/>
<dbReference type="HOGENOM" id="CLU_016077_6_2_9"/>
<dbReference type="GO" id="GO:0005525">
    <property type="term" value="F:GTP binding"/>
    <property type="evidence" value="ECO:0007669"/>
    <property type="project" value="UniProtKB-UniRule"/>
</dbReference>
<dbReference type="GO" id="GO:0043022">
    <property type="term" value="F:ribosome binding"/>
    <property type="evidence" value="ECO:0007669"/>
    <property type="project" value="TreeGrafter"/>
</dbReference>
<dbReference type="GO" id="GO:0042254">
    <property type="term" value="P:ribosome biogenesis"/>
    <property type="evidence" value="ECO:0007669"/>
    <property type="project" value="UniProtKB-KW"/>
</dbReference>
<dbReference type="CDD" id="cd01894">
    <property type="entry name" value="EngA1"/>
    <property type="match status" value="1"/>
</dbReference>
<dbReference type="CDD" id="cd01895">
    <property type="entry name" value="EngA2"/>
    <property type="match status" value="1"/>
</dbReference>
<dbReference type="FunFam" id="3.30.300.20:FF:000004">
    <property type="entry name" value="GTPase Der"/>
    <property type="match status" value="1"/>
</dbReference>
<dbReference type="FunFam" id="3.40.50.300:FF:000040">
    <property type="entry name" value="GTPase Der"/>
    <property type="match status" value="1"/>
</dbReference>
<dbReference type="FunFam" id="3.40.50.300:FF:000057">
    <property type="entry name" value="GTPase Der"/>
    <property type="match status" value="1"/>
</dbReference>
<dbReference type="Gene3D" id="3.30.300.20">
    <property type="match status" value="1"/>
</dbReference>
<dbReference type="Gene3D" id="3.40.50.300">
    <property type="entry name" value="P-loop containing nucleotide triphosphate hydrolases"/>
    <property type="match status" value="2"/>
</dbReference>
<dbReference type="HAMAP" id="MF_00195">
    <property type="entry name" value="GTPase_Der"/>
    <property type="match status" value="1"/>
</dbReference>
<dbReference type="InterPro" id="IPR031166">
    <property type="entry name" value="G_ENGA"/>
</dbReference>
<dbReference type="InterPro" id="IPR006073">
    <property type="entry name" value="GTP-bd"/>
</dbReference>
<dbReference type="InterPro" id="IPR016484">
    <property type="entry name" value="GTPase_Der"/>
</dbReference>
<dbReference type="InterPro" id="IPR032859">
    <property type="entry name" value="KH_dom-like"/>
</dbReference>
<dbReference type="InterPro" id="IPR015946">
    <property type="entry name" value="KH_dom-like_a/b"/>
</dbReference>
<dbReference type="InterPro" id="IPR027417">
    <property type="entry name" value="P-loop_NTPase"/>
</dbReference>
<dbReference type="InterPro" id="IPR005225">
    <property type="entry name" value="Small_GTP-bd"/>
</dbReference>
<dbReference type="NCBIfam" id="TIGR03594">
    <property type="entry name" value="GTPase_EngA"/>
    <property type="match status" value="1"/>
</dbReference>
<dbReference type="NCBIfam" id="TIGR00231">
    <property type="entry name" value="small_GTP"/>
    <property type="match status" value="2"/>
</dbReference>
<dbReference type="PANTHER" id="PTHR43834">
    <property type="entry name" value="GTPASE DER"/>
    <property type="match status" value="1"/>
</dbReference>
<dbReference type="PANTHER" id="PTHR43834:SF6">
    <property type="entry name" value="GTPASE DER"/>
    <property type="match status" value="1"/>
</dbReference>
<dbReference type="Pfam" id="PF14714">
    <property type="entry name" value="KH_dom-like"/>
    <property type="match status" value="1"/>
</dbReference>
<dbReference type="Pfam" id="PF01926">
    <property type="entry name" value="MMR_HSR1"/>
    <property type="match status" value="2"/>
</dbReference>
<dbReference type="PIRSF" id="PIRSF006485">
    <property type="entry name" value="GTP-binding_EngA"/>
    <property type="match status" value="1"/>
</dbReference>
<dbReference type="PRINTS" id="PR00326">
    <property type="entry name" value="GTP1OBG"/>
</dbReference>
<dbReference type="SUPFAM" id="SSF52540">
    <property type="entry name" value="P-loop containing nucleoside triphosphate hydrolases"/>
    <property type="match status" value="2"/>
</dbReference>
<dbReference type="PROSITE" id="PS51712">
    <property type="entry name" value="G_ENGA"/>
    <property type="match status" value="2"/>
</dbReference>
<proteinExistence type="inferred from homology"/>
<sequence length="436" mass="49144">MAKPVVAIVGRPNVGKSTIFNRIVGERVSIVEDVPGVTRDRIYNSAEWLGKEFNIIDTGGIDLSDEPFLEQIRAQAEIAIDEADVIIFITNGREGVTDADEQVAKILYRSNKPIVLAINKVDNPEMRDQIYDFYSLGFGEPYPISGSHGLGLGDMLDAVRAHFPKEEEEEYPDDTVKFSLIGRPNVGKSSILNALLGEDRVIVSDIAGTTRDAIDTTYTFDGQDYVMIDTAGMRKRGKVYESTEKYSVLRAMRAIERSDVVLVVINAEEGIREQDKRIAGYAHDAGRAIIIVVNKWDAINKDEKTINVWTEDIREQFQFLSYAPIVFVSAKTKQRLNNLFPLINQVSDNHSLRVQSSMLNDVISDAVAMNPSPMDKGKRLKIFYTTQVAVKPPTFVVFVNDPELMHFSYERFLENRIREAFPFEGTPIRVIARKRK</sequence>
<evidence type="ECO:0000255" key="1">
    <source>
        <dbReference type="HAMAP-Rule" id="MF_00195"/>
    </source>
</evidence>
<feature type="chain" id="PRO_0000179009" description="GTPase Der">
    <location>
        <begin position="1"/>
        <end position="436"/>
    </location>
</feature>
<feature type="domain" description="EngA-type G 1">
    <location>
        <begin position="4"/>
        <end position="167"/>
    </location>
</feature>
<feature type="domain" description="EngA-type G 2">
    <location>
        <begin position="176"/>
        <end position="351"/>
    </location>
</feature>
<feature type="domain" description="KH-like" evidence="1">
    <location>
        <begin position="352"/>
        <end position="436"/>
    </location>
</feature>
<feature type="binding site" evidence="1">
    <location>
        <begin position="10"/>
        <end position="17"/>
    </location>
    <ligand>
        <name>GTP</name>
        <dbReference type="ChEBI" id="CHEBI:37565"/>
        <label>1</label>
    </ligand>
</feature>
<feature type="binding site" evidence="1">
    <location>
        <begin position="57"/>
        <end position="61"/>
    </location>
    <ligand>
        <name>GTP</name>
        <dbReference type="ChEBI" id="CHEBI:37565"/>
        <label>1</label>
    </ligand>
</feature>
<feature type="binding site" evidence="1">
    <location>
        <begin position="119"/>
        <end position="122"/>
    </location>
    <ligand>
        <name>GTP</name>
        <dbReference type="ChEBI" id="CHEBI:37565"/>
        <label>1</label>
    </ligand>
</feature>
<feature type="binding site" evidence="1">
    <location>
        <begin position="182"/>
        <end position="189"/>
    </location>
    <ligand>
        <name>GTP</name>
        <dbReference type="ChEBI" id="CHEBI:37565"/>
        <label>2</label>
    </ligand>
</feature>
<feature type="binding site" evidence="1">
    <location>
        <begin position="229"/>
        <end position="233"/>
    </location>
    <ligand>
        <name>GTP</name>
        <dbReference type="ChEBI" id="CHEBI:37565"/>
        <label>2</label>
    </ligand>
</feature>
<feature type="binding site" evidence="1">
    <location>
        <begin position="294"/>
        <end position="297"/>
    </location>
    <ligand>
        <name>GTP</name>
        <dbReference type="ChEBI" id="CHEBI:37565"/>
        <label>2</label>
    </ligand>
</feature>
<keyword id="KW-0342">GTP-binding</keyword>
<keyword id="KW-0547">Nucleotide-binding</keyword>
<keyword id="KW-0677">Repeat</keyword>
<keyword id="KW-0690">Ribosome biogenesis</keyword>
<reference key="1">
    <citation type="journal article" date="2004" name="Nucleic Acids Res.">
        <title>Whole genome comparisons of serotype 4b and 1/2a strains of the food-borne pathogen Listeria monocytogenes reveal new insights into the core genome components of this species.</title>
        <authorList>
            <person name="Nelson K.E."/>
            <person name="Fouts D.E."/>
            <person name="Mongodin E.F."/>
            <person name="Ravel J."/>
            <person name="DeBoy R.T."/>
            <person name="Kolonay J.F."/>
            <person name="Rasko D.A."/>
            <person name="Angiuoli S.V."/>
            <person name="Gill S.R."/>
            <person name="Paulsen I.T."/>
            <person name="Peterson J.D."/>
            <person name="White O."/>
            <person name="Nelson W.C."/>
            <person name="Nierman W.C."/>
            <person name="Beanan M.J."/>
            <person name="Brinkac L.M."/>
            <person name="Daugherty S.C."/>
            <person name="Dodson R.J."/>
            <person name="Durkin A.S."/>
            <person name="Madupu R."/>
            <person name="Haft D.H."/>
            <person name="Selengut J."/>
            <person name="Van Aken S.E."/>
            <person name="Khouri H.M."/>
            <person name="Fedorova N."/>
            <person name="Forberger H.A."/>
            <person name="Tran B."/>
            <person name="Kathariou S."/>
            <person name="Wonderling L.D."/>
            <person name="Uhlich G.A."/>
            <person name="Bayles D.O."/>
            <person name="Luchansky J.B."/>
            <person name="Fraser C.M."/>
        </authorList>
    </citation>
    <scope>NUCLEOTIDE SEQUENCE [LARGE SCALE GENOMIC DNA]</scope>
    <source>
        <strain>F2365</strain>
    </source>
</reference>
<organism>
    <name type="scientific">Listeria monocytogenes serotype 4b (strain F2365)</name>
    <dbReference type="NCBI Taxonomy" id="265669"/>
    <lineage>
        <taxon>Bacteria</taxon>
        <taxon>Bacillati</taxon>
        <taxon>Bacillota</taxon>
        <taxon>Bacilli</taxon>
        <taxon>Bacillales</taxon>
        <taxon>Listeriaceae</taxon>
        <taxon>Listeria</taxon>
    </lineage>
</organism>
<protein>
    <recommendedName>
        <fullName evidence="1">GTPase Der</fullName>
    </recommendedName>
    <alternativeName>
        <fullName evidence="1">GTP-binding protein EngA</fullName>
    </alternativeName>
</protein>
<name>DER_LISMF</name>